<protein>
    <recommendedName>
        <fullName evidence="1">tRNA uridine 5-carboxymethylaminomethyl modification enzyme MnmG</fullName>
    </recommendedName>
    <alternativeName>
        <fullName evidence="1">Glucose-inhibited division protein A</fullName>
    </alternativeName>
</protein>
<gene>
    <name evidence="1" type="primary">mnmG</name>
    <name evidence="1" type="synonym">gidA</name>
    <name type="ordered locus">DNO_0672</name>
</gene>
<proteinExistence type="inferred from homology"/>
<sequence>MHYPDLFDVIVVGGGHAGVEAACAAARMGCDTLLLTQNIETIGQMSCNPSIGGIGKGHLVKEIDALDGVMARATDRAGIHWRILNRRKGAAVQATRAQADRVLYKAAVRALVEKQEHLRVFQTEVSGILLNGETVIGVSSQHKIDFHAKTVIITAGTFLGGKIYVGLNYFVGGRAGDPAALELANKLRDLPFETHRMKTGTPPRIDARSIDFSQMSEQLGDEPLPVFSYLGNVNEHPRQIPCHITHTNTQTHDIIREYIDQAPMYAGVIKDAFGPRYCPSIEDKVMRFHDKTSHQIFLEPESLTTNEIYPNGISTSLPFEAQLKYVHTIKGLEQAIITRPGYAIEYDFFNPQGLRYTLETKAIKNLFFAGQINGTTGYEEAAAQGLLAGINAALRVYDKEGWYPRRDQAYLGVLIDDLITQGTREPYRMFTSRAEHRLLLREDNADQRLTAIGYQLGCVGSARMKQFDAKMTAVAHASDQLKKLLIPADRLSGLTHNTYAAELLKRPEIDVRAVLALANVPPDEYPSDEVIEQIDIAAKYSGYIQRQYEEVAKLQKNRAQKLPVPFDYRKVTGLSAELAEKLQKVQPHDLDQAARIAGMTPAALSLLLIYFKKHTQPLSNSEKGGDCVGEKL</sequence>
<name>MNMG_DICNV</name>
<dbReference type="EMBL" id="CP000513">
    <property type="protein sequence ID" value="ABQ13417.1"/>
    <property type="molecule type" value="Genomic_DNA"/>
</dbReference>
<dbReference type="RefSeq" id="WP_012031005.1">
    <property type="nucleotide sequence ID" value="NC_009446.1"/>
</dbReference>
<dbReference type="SMR" id="A5EV65"/>
<dbReference type="STRING" id="246195.DNO_0672"/>
<dbReference type="KEGG" id="dno:DNO_0672"/>
<dbReference type="eggNOG" id="COG0445">
    <property type="taxonomic scope" value="Bacteria"/>
</dbReference>
<dbReference type="HOGENOM" id="CLU_007831_2_2_6"/>
<dbReference type="OrthoDB" id="9815560at2"/>
<dbReference type="Proteomes" id="UP000000248">
    <property type="component" value="Chromosome"/>
</dbReference>
<dbReference type="GO" id="GO:0005829">
    <property type="term" value="C:cytosol"/>
    <property type="evidence" value="ECO:0007669"/>
    <property type="project" value="TreeGrafter"/>
</dbReference>
<dbReference type="GO" id="GO:0050660">
    <property type="term" value="F:flavin adenine dinucleotide binding"/>
    <property type="evidence" value="ECO:0007669"/>
    <property type="project" value="UniProtKB-UniRule"/>
</dbReference>
<dbReference type="GO" id="GO:0030488">
    <property type="term" value="P:tRNA methylation"/>
    <property type="evidence" value="ECO:0007669"/>
    <property type="project" value="TreeGrafter"/>
</dbReference>
<dbReference type="GO" id="GO:0002098">
    <property type="term" value="P:tRNA wobble uridine modification"/>
    <property type="evidence" value="ECO:0007669"/>
    <property type="project" value="InterPro"/>
</dbReference>
<dbReference type="FunFam" id="1.10.150.570:FF:000001">
    <property type="entry name" value="tRNA uridine 5-carboxymethylaminomethyl modification enzyme MnmG"/>
    <property type="match status" value="1"/>
</dbReference>
<dbReference type="FunFam" id="3.50.50.60:FF:000002">
    <property type="entry name" value="tRNA uridine 5-carboxymethylaminomethyl modification enzyme MnmG"/>
    <property type="match status" value="1"/>
</dbReference>
<dbReference type="FunFam" id="3.50.50.60:FF:000010">
    <property type="entry name" value="tRNA uridine 5-carboxymethylaminomethyl modification enzyme MnmG"/>
    <property type="match status" value="1"/>
</dbReference>
<dbReference type="Gene3D" id="3.50.50.60">
    <property type="entry name" value="FAD/NAD(P)-binding domain"/>
    <property type="match status" value="2"/>
</dbReference>
<dbReference type="Gene3D" id="1.10.150.570">
    <property type="entry name" value="GidA associated domain, C-terminal subdomain"/>
    <property type="match status" value="1"/>
</dbReference>
<dbReference type="Gene3D" id="1.10.10.1800">
    <property type="entry name" value="tRNA uridine 5-carboxymethylaminomethyl modification enzyme MnmG/GidA"/>
    <property type="match status" value="1"/>
</dbReference>
<dbReference type="HAMAP" id="MF_00129">
    <property type="entry name" value="MnmG_GidA"/>
    <property type="match status" value="1"/>
</dbReference>
<dbReference type="InterPro" id="IPR036188">
    <property type="entry name" value="FAD/NAD-bd_sf"/>
</dbReference>
<dbReference type="InterPro" id="IPR049312">
    <property type="entry name" value="GIDA_C_N"/>
</dbReference>
<dbReference type="InterPro" id="IPR004416">
    <property type="entry name" value="MnmG"/>
</dbReference>
<dbReference type="InterPro" id="IPR002218">
    <property type="entry name" value="MnmG-rel"/>
</dbReference>
<dbReference type="InterPro" id="IPR020595">
    <property type="entry name" value="MnmG-rel_CS"/>
</dbReference>
<dbReference type="InterPro" id="IPR026904">
    <property type="entry name" value="MnmG_C"/>
</dbReference>
<dbReference type="InterPro" id="IPR047001">
    <property type="entry name" value="MnmG_C_subdom"/>
</dbReference>
<dbReference type="InterPro" id="IPR044920">
    <property type="entry name" value="MnmG_C_subdom_sf"/>
</dbReference>
<dbReference type="InterPro" id="IPR040131">
    <property type="entry name" value="MnmG_N"/>
</dbReference>
<dbReference type="NCBIfam" id="TIGR00136">
    <property type="entry name" value="mnmG_gidA"/>
    <property type="match status" value="1"/>
</dbReference>
<dbReference type="PANTHER" id="PTHR11806">
    <property type="entry name" value="GLUCOSE INHIBITED DIVISION PROTEIN A"/>
    <property type="match status" value="1"/>
</dbReference>
<dbReference type="PANTHER" id="PTHR11806:SF0">
    <property type="entry name" value="PROTEIN MTO1 HOMOLOG, MITOCHONDRIAL"/>
    <property type="match status" value="1"/>
</dbReference>
<dbReference type="Pfam" id="PF01134">
    <property type="entry name" value="GIDA"/>
    <property type="match status" value="1"/>
</dbReference>
<dbReference type="Pfam" id="PF21680">
    <property type="entry name" value="GIDA_C_1st"/>
    <property type="match status" value="1"/>
</dbReference>
<dbReference type="Pfam" id="PF13932">
    <property type="entry name" value="SAM_GIDA_C"/>
    <property type="match status" value="1"/>
</dbReference>
<dbReference type="SMART" id="SM01228">
    <property type="entry name" value="GIDA_assoc_3"/>
    <property type="match status" value="1"/>
</dbReference>
<dbReference type="SUPFAM" id="SSF51905">
    <property type="entry name" value="FAD/NAD(P)-binding domain"/>
    <property type="match status" value="1"/>
</dbReference>
<dbReference type="PROSITE" id="PS01280">
    <property type="entry name" value="GIDA_1"/>
    <property type="match status" value="1"/>
</dbReference>
<dbReference type="PROSITE" id="PS01281">
    <property type="entry name" value="GIDA_2"/>
    <property type="match status" value="1"/>
</dbReference>
<organism>
    <name type="scientific">Dichelobacter nodosus (strain VCS1703A)</name>
    <dbReference type="NCBI Taxonomy" id="246195"/>
    <lineage>
        <taxon>Bacteria</taxon>
        <taxon>Pseudomonadati</taxon>
        <taxon>Pseudomonadota</taxon>
        <taxon>Gammaproteobacteria</taxon>
        <taxon>Cardiobacteriales</taxon>
        <taxon>Cardiobacteriaceae</taxon>
        <taxon>Dichelobacter</taxon>
    </lineage>
</organism>
<comment type="function">
    <text evidence="1">NAD-binding protein involved in the addition of a carboxymethylaminomethyl (cmnm) group at the wobble position (U34) of certain tRNAs, forming tRNA-cmnm(5)s(2)U34.</text>
</comment>
<comment type="cofactor">
    <cofactor evidence="1">
        <name>FAD</name>
        <dbReference type="ChEBI" id="CHEBI:57692"/>
    </cofactor>
</comment>
<comment type="subunit">
    <text evidence="1">Homodimer. Heterotetramer of two MnmE and two MnmG subunits.</text>
</comment>
<comment type="subcellular location">
    <subcellularLocation>
        <location evidence="1">Cytoplasm</location>
    </subcellularLocation>
</comment>
<comment type="similarity">
    <text evidence="1">Belongs to the MnmG family.</text>
</comment>
<accession>A5EV65</accession>
<reference key="1">
    <citation type="journal article" date="2007" name="Nat. Biotechnol.">
        <title>Genome sequence and identification of candidate vaccine antigens from the animal pathogen Dichelobacter nodosus.</title>
        <authorList>
            <person name="Myers G.S.A."/>
            <person name="Parker D."/>
            <person name="Al-Hasani K."/>
            <person name="Kennan R.M."/>
            <person name="Seemann T."/>
            <person name="Ren Q."/>
            <person name="Badger J.H."/>
            <person name="Selengut J.D."/>
            <person name="Deboy R.T."/>
            <person name="Tettelin H."/>
            <person name="Boyce J.D."/>
            <person name="McCarl V.P."/>
            <person name="Han X."/>
            <person name="Nelson W.C."/>
            <person name="Madupu R."/>
            <person name="Mohamoud Y."/>
            <person name="Holley T."/>
            <person name="Fedorova N."/>
            <person name="Khouri H."/>
            <person name="Bottomley S.P."/>
            <person name="Whittington R.J."/>
            <person name="Adler B."/>
            <person name="Songer J.G."/>
            <person name="Rood J.I."/>
            <person name="Paulsen I.T."/>
        </authorList>
    </citation>
    <scope>NUCLEOTIDE SEQUENCE [LARGE SCALE GENOMIC DNA]</scope>
    <source>
        <strain>VCS1703A</strain>
    </source>
</reference>
<keyword id="KW-0963">Cytoplasm</keyword>
<keyword id="KW-0274">FAD</keyword>
<keyword id="KW-0285">Flavoprotein</keyword>
<keyword id="KW-0520">NAD</keyword>
<keyword id="KW-1185">Reference proteome</keyword>
<keyword id="KW-0819">tRNA processing</keyword>
<feature type="chain" id="PRO_1000016591" description="tRNA uridine 5-carboxymethylaminomethyl modification enzyme MnmG">
    <location>
        <begin position="1"/>
        <end position="632"/>
    </location>
</feature>
<feature type="binding site" evidence="1">
    <location>
        <begin position="13"/>
        <end position="18"/>
    </location>
    <ligand>
        <name>FAD</name>
        <dbReference type="ChEBI" id="CHEBI:57692"/>
    </ligand>
</feature>
<feature type="binding site" evidence="1">
    <location>
        <begin position="274"/>
        <end position="288"/>
    </location>
    <ligand>
        <name>NAD(+)</name>
        <dbReference type="ChEBI" id="CHEBI:57540"/>
    </ligand>
</feature>
<evidence type="ECO:0000255" key="1">
    <source>
        <dbReference type="HAMAP-Rule" id="MF_00129"/>
    </source>
</evidence>